<protein>
    <recommendedName>
        <fullName evidence="1">tRNA-2-methylthio-N(6)-dimethylallyladenosine synthase</fullName>
        <ecNumber evidence="1">2.8.4.3</ecNumber>
    </recommendedName>
    <alternativeName>
        <fullName evidence="1">(Dimethylallyl)adenosine tRNA methylthiotransferase MiaB</fullName>
    </alternativeName>
    <alternativeName>
        <fullName evidence="1">tRNA-i(6)A37 methylthiotransferase</fullName>
    </alternativeName>
</protein>
<comment type="function">
    <text evidence="1">Catalyzes the methylthiolation of N6-(dimethylallyl)adenosine (i(6)A), leading to the formation of 2-methylthio-N6-(dimethylallyl)adenosine (ms(2)i(6)A) at position 37 in tRNAs that read codons beginning with uridine.</text>
</comment>
<comment type="catalytic activity">
    <reaction evidence="1">
        <text>N(6)-dimethylallyladenosine(37) in tRNA + (sulfur carrier)-SH + AH2 + 2 S-adenosyl-L-methionine = 2-methylsulfanyl-N(6)-dimethylallyladenosine(37) in tRNA + (sulfur carrier)-H + 5'-deoxyadenosine + L-methionine + A + S-adenosyl-L-homocysteine + 2 H(+)</text>
        <dbReference type="Rhea" id="RHEA:37067"/>
        <dbReference type="Rhea" id="RHEA-COMP:10375"/>
        <dbReference type="Rhea" id="RHEA-COMP:10376"/>
        <dbReference type="Rhea" id="RHEA-COMP:14737"/>
        <dbReference type="Rhea" id="RHEA-COMP:14739"/>
        <dbReference type="ChEBI" id="CHEBI:13193"/>
        <dbReference type="ChEBI" id="CHEBI:15378"/>
        <dbReference type="ChEBI" id="CHEBI:17319"/>
        <dbReference type="ChEBI" id="CHEBI:17499"/>
        <dbReference type="ChEBI" id="CHEBI:29917"/>
        <dbReference type="ChEBI" id="CHEBI:57844"/>
        <dbReference type="ChEBI" id="CHEBI:57856"/>
        <dbReference type="ChEBI" id="CHEBI:59789"/>
        <dbReference type="ChEBI" id="CHEBI:64428"/>
        <dbReference type="ChEBI" id="CHEBI:74415"/>
        <dbReference type="ChEBI" id="CHEBI:74417"/>
        <dbReference type="EC" id="2.8.4.3"/>
    </reaction>
</comment>
<comment type="cofactor">
    <cofactor evidence="1">
        <name>[4Fe-4S] cluster</name>
        <dbReference type="ChEBI" id="CHEBI:49883"/>
    </cofactor>
    <text evidence="1">Binds 2 [4Fe-4S] clusters. One cluster is coordinated with 3 cysteines and an exchangeable S-adenosyl-L-methionine.</text>
</comment>
<comment type="subunit">
    <text evidence="1">Monomer.</text>
</comment>
<comment type="subcellular location">
    <subcellularLocation>
        <location evidence="1">Cytoplasm</location>
    </subcellularLocation>
</comment>
<comment type="similarity">
    <text evidence="1">Belongs to the methylthiotransferase family. MiaB subfamily.</text>
</comment>
<organism>
    <name type="scientific">Anoxybacillus flavithermus (strain DSM 21510 / WK1)</name>
    <dbReference type="NCBI Taxonomy" id="491915"/>
    <lineage>
        <taxon>Bacteria</taxon>
        <taxon>Bacillati</taxon>
        <taxon>Bacillota</taxon>
        <taxon>Bacilli</taxon>
        <taxon>Bacillales</taxon>
        <taxon>Anoxybacillaceae</taxon>
        <taxon>Anoxybacillus</taxon>
    </lineage>
</organism>
<reference key="1">
    <citation type="journal article" date="2008" name="Genome Biol.">
        <title>Encapsulated in silica: genome, proteome and physiology of the thermophilic bacterium Anoxybacillus flavithermus WK1.</title>
        <authorList>
            <person name="Saw J.H."/>
            <person name="Mountain B.W."/>
            <person name="Feng L."/>
            <person name="Omelchenko M.V."/>
            <person name="Hou S."/>
            <person name="Saito J.A."/>
            <person name="Stott M.B."/>
            <person name="Li D."/>
            <person name="Zhao G."/>
            <person name="Wu J."/>
            <person name="Galperin M.Y."/>
            <person name="Koonin E.V."/>
            <person name="Makarova K.S."/>
            <person name="Wolf Y.I."/>
            <person name="Rigden D.J."/>
            <person name="Dunfield P.F."/>
            <person name="Wang L."/>
            <person name="Alam M."/>
        </authorList>
    </citation>
    <scope>NUCLEOTIDE SEQUENCE [LARGE SCALE GENOMIC DNA]</scope>
    <source>
        <strain>DSM 21510 / WK1</strain>
    </source>
</reference>
<sequence>MMNEKQRLQYTAQIETDHPTDKKSALDENLQRLKQKTSQDYEKYFSTVFVPPSLKEAKKRGKEEVKYHKDFSIPEEFRGMGNGRKFYIRTYGCQMNEHDTEVMAGIFMALGYEPTDRPEDANVILLNTCAIRENAENKVFGEIGHLKPLKQNNPDLLLGVCGCMSQEESVVNKILKQFQYVDMIFGTHNIHRLPYILKEAYMSKEMVVEVWSKEGDVIENLPKVRKGNIKAWVNIMYGCDKFCTYCIVPYTRGKERSRRPEDIIQEVRHLAAQGYKEITLLGQNVNAYGKDFTDMKYGLGDLMDELRKIDIPRIRFTTSHPRDFDDRLIEVLAKGGNLVEHIHLPVQSGSSEVLKMMARKYTREQYLELVRKIKEAIPGVALTTDIIVGFPNETDEQFEETLSLYREVEFDSAFTFIYSPREGTPAAKMVDNVPMEVKKERLQRLNALVNEISAKKMKEYEGQVVEVLVEGESKNNPDVLAGYTRKNKLVNFVGPKSAIGQLVNVRITEAKTWTLNGEMVEETIEVK</sequence>
<gene>
    <name evidence="1" type="primary">miaB</name>
    <name type="ordered locus">Aflv_1523</name>
</gene>
<evidence type="ECO:0000255" key="1">
    <source>
        <dbReference type="HAMAP-Rule" id="MF_01864"/>
    </source>
</evidence>
<evidence type="ECO:0000255" key="2">
    <source>
        <dbReference type="PROSITE-ProRule" id="PRU01266"/>
    </source>
</evidence>
<evidence type="ECO:0000256" key="3">
    <source>
        <dbReference type="SAM" id="MobiDB-lite"/>
    </source>
</evidence>
<feature type="chain" id="PRO_0000374115" description="tRNA-2-methylthio-N(6)-dimethylallyladenosine synthase">
    <location>
        <begin position="1"/>
        <end position="527"/>
    </location>
</feature>
<feature type="domain" description="MTTase N-terminal" evidence="1">
    <location>
        <begin position="84"/>
        <end position="202"/>
    </location>
</feature>
<feature type="domain" description="Radical SAM core" evidence="2">
    <location>
        <begin position="225"/>
        <end position="455"/>
    </location>
</feature>
<feature type="domain" description="TRAM" evidence="1">
    <location>
        <begin position="458"/>
        <end position="521"/>
    </location>
</feature>
<feature type="region of interest" description="Disordered" evidence="3">
    <location>
        <begin position="1"/>
        <end position="27"/>
    </location>
</feature>
<feature type="compositionally biased region" description="Basic and acidic residues" evidence="3">
    <location>
        <begin position="15"/>
        <end position="27"/>
    </location>
</feature>
<feature type="binding site" evidence="1">
    <location>
        <position position="93"/>
    </location>
    <ligand>
        <name>[4Fe-4S] cluster</name>
        <dbReference type="ChEBI" id="CHEBI:49883"/>
        <label>1</label>
    </ligand>
</feature>
<feature type="binding site" evidence="1">
    <location>
        <position position="129"/>
    </location>
    <ligand>
        <name>[4Fe-4S] cluster</name>
        <dbReference type="ChEBI" id="CHEBI:49883"/>
        <label>1</label>
    </ligand>
</feature>
<feature type="binding site" evidence="1">
    <location>
        <position position="163"/>
    </location>
    <ligand>
        <name>[4Fe-4S] cluster</name>
        <dbReference type="ChEBI" id="CHEBI:49883"/>
        <label>1</label>
    </ligand>
</feature>
<feature type="binding site" evidence="1">
    <location>
        <position position="239"/>
    </location>
    <ligand>
        <name>[4Fe-4S] cluster</name>
        <dbReference type="ChEBI" id="CHEBI:49883"/>
        <label>2</label>
        <note>4Fe-4S-S-AdoMet</note>
    </ligand>
</feature>
<feature type="binding site" evidence="1">
    <location>
        <position position="243"/>
    </location>
    <ligand>
        <name>[4Fe-4S] cluster</name>
        <dbReference type="ChEBI" id="CHEBI:49883"/>
        <label>2</label>
        <note>4Fe-4S-S-AdoMet</note>
    </ligand>
</feature>
<feature type="binding site" evidence="1">
    <location>
        <position position="246"/>
    </location>
    <ligand>
        <name>[4Fe-4S] cluster</name>
        <dbReference type="ChEBI" id="CHEBI:49883"/>
        <label>2</label>
        <note>4Fe-4S-S-AdoMet</note>
    </ligand>
</feature>
<keyword id="KW-0004">4Fe-4S</keyword>
<keyword id="KW-0963">Cytoplasm</keyword>
<keyword id="KW-0408">Iron</keyword>
<keyword id="KW-0411">Iron-sulfur</keyword>
<keyword id="KW-0479">Metal-binding</keyword>
<keyword id="KW-0949">S-adenosyl-L-methionine</keyword>
<keyword id="KW-0808">Transferase</keyword>
<keyword id="KW-0819">tRNA processing</keyword>
<dbReference type="EC" id="2.8.4.3" evidence="1"/>
<dbReference type="EMBL" id="CP000922">
    <property type="protein sequence ID" value="ACJ33889.1"/>
    <property type="molecule type" value="Genomic_DNA"/>
</dbReference>
<dbReference type="SMR" id="B7GJM6"/>
<dbReference type="STRING" id="491915.Aflv_1523"/>
<dbReference type="KEGG" id="afl:Aflv_1523"/>
<dbReference type="eggNOG" id="COG0621">
    <property type="taxonomic scope" value="Bacteria"/>
</dbReference>
<dbReference type="HOGENOM" id="CLU_018697_2_0_9"/>
<dbReference type="Proteomes" id="UP000000742">
    <property type="component" value="Chromosome"/>
</dbReference>
<dbReference type="GO" id="GO:0005829">
    <property type="term" value="C:cytosol"/>
    <property type="evidence" value="ECO:0007669"/>
    <property type="project" value="TreeGrafter"/>
</dbReference>
<dbReference type="GO" id="GO:0051539">
    <property type="term" value="F:4 iron, 4 sulfur cluster binding"/>
    <property type="evidence" value="ECO:0007669"/>
    <property type="project" value="UniProtKB-UniRule"/>
</dbReference>
<dbReference type="GO" id="GO:0046872">
    <property type="term" value="F:metal ion binding"/>
    <property type="evidence" value="ECO:0007669"/>
    <property type="project" value="UniProtKB-KW"/>
</dbReference>
<dbReference type="GO" id="GO:0035597">
    <property type="term" value="F:N6-isopentenyladenosine methylthiotransferase activity"/>
    <property type="evidence" value="ECO:0007669"/>
    <property type="project" value="TreeGrafter"/>
</dbReference>
<dbReference type="CDD" id="cd01335">
    <property type="entry name" value="Radical_SAM"/>
    <property type="match status" value="1"/>
</dbReference>
<dbReference type="FunFam" id="3.40.50.12160:FF:000006">
    <property type="entry name" value="tRNA-2-methylthio-N(6)-dimethylallyladenosine synthase"/>
    <property type="match status" value="1"/>
</dbReference>
<dbReference type="FunFam" id="3.80.30.20:FF:000001">
    <property type="entry name" value="tRNA-2-methylthio-N(6)-dimethylallyladenosine synthase 2"/>
    <property type="match status" value="1"/>
</dbReference>
<dbReference type="Gene3D" id="3.40.50.12160">
    <property type="entry name" value="Methylthiotransferase, N-terminal domain"/>
    <property type="match status" value="1"/>
</dbReference>
<dbReference type="Gene3D" id="3.80.30.20">
    <property type="entry name" value="tm_1862 like domain"/>
    <property type="match status" value="1"/>
</dbReference>
<dbReference type="HAMAP" id="MF_01864">
    <property type="entry name" value="tRNA_metthiotr_MiaB"/>
    <property type="match status" value="1"/>
</dbReference>
<dbReference type="InterPro" id="IPR006638">
    <property type="entry name" value="Elp3/MiaA/NifB-like_rSAM"/>
</dbReference>
<dbReference type="InterPro" id="IPR005839">
    <property type="entry name" value="Methylthiotransferase"/>
</dbReference>
<dbReference type="InterPro" id="IPR020612">
    <property type="entry name" value="Methylthiotransferase_CS"/>
</dbReference>
<dbReference type="InterPro" id="IPR013848">
    <property type="entry name" value="Methylthiotransferase_N"/>
</dbReference>
<dbReference type="InterPro" id="IPR038135">
    <property type="entry name" value="Methylthiotransferase_N_sf"/>
</dbReference>
<dbReference type="InterPro" id="IPR006463">
    <property type="entry name" value="MiaB_methiolase"/>
</dbReference>
<dbReference type="InterPro" id="IPR007197">
    <property type="entry name" value="rSAM"/>
</dbReference>
<dbReference type="InterPro" id="IPR023404">
    <property type="entry name" value="rSAM_horseshoe"/>
</dbReference>
<dbReference type="InterPro" id="IPR002792">
    <property type="entry name" value="TRAM_dom"/>
</dbReference>
<dbReference type="NCBIfam" id="TIGR01574">
    <property type="entry name" value="miaB-methiolase"/>
    <property type="match status" value="1"/>
</dbReference>
<dbReference type="NCBIfam" id="TIGR00089">
    <property type="entry name" value="MiaB/RimO family radical SAM methylthiotransferase"/>
    <property type="match status" value="1"/>
</dbReference>
<dbReference type="PANTHER" id="PTHR43020">
    <property type="entry name" value="CDK5 REGULATORY SUBUNIT-ASSOCIATED PROTEIN 1"/>
    <property type="match status" value="1"/>
</dbReference>
<dbReference type="PANTHER" id="PTHR43020:SF2">
    <property type="entry name" value="MITOCHONDRIAL TRNA METHYLTHIOTRANSFERASE CDK5RAP1"/>
    <property type="match status" value="1"/>
</dbReference>
<dbReference type="Pfam" id="PF04055">
    <property type="entry name" value="Radical_SAM"/>
    <property type="match status" value="1"/>
</dbReference>
<dbReference type="Pfam" id="PF01938">
    <property type="entry name" value="TRAM"/>
    <property type="match status" value="1"/>
</dbReference>
<dbReference type="Pfam" id="PF00919">
    <property type="entry name" value="UPF0004"/>
    <property type="match status" value="1"/>
</dbReference>
<dbReference type="SFLD" id="SFLDF00273">
    <property type="entry name" value="(dimethylallyl)adenosine_tRNA"/>
    <property type="match status" value="1"/>
</dbReference>
<dbReference type="SFLD" id="SFLDG01082">
    <property type="entry name" value="B12-binding_domain_containing"/>
    <property type="match status" value="1"/>
</dbReference>
<dbReference type="SFLD" id="SFLDG01061">
    <property type="entry name" value="methylthiotransferase"/>
    <property type="match status" value="1"/>
</dbReference>
<dbReference type="SMART" id="SM00729">
    <property type="entry name" value="Elp3"/>
    <property type="match status" value="1"/>
</dbReference>
<dbReference type="SUPFAM" id="SSF102114">
    <property type="entry name" value="Radical SAM enzymes"/>
    <property type="match status" value="1"/>
</dbReference>
<dbReference type="PROSITE" id="PS51449">
    <property type="entry name" value="MTTASE_N"/>
    <property type="match status" value="1"/>
</dbReference>
<dbReference type="PROSITE" id="PS01278">
    <property type="entry name" value="MTTASE_RADICAL"/>
    <property type="match status" value="1"/>
</dbReference>
<dbReference type="PROSITE" id="PS51918">
    <property type="entry name" value="RADICAL_SAM"/>
    <property type="match status" value="1"/>
</dbReference>
<dbReference type="PROSITE" id="PS50926">
    <property type="entry name" value="TRAM"/>
    <property type="match status" value="1"/>
</dbReference>
<accession>B7GJM6</accession>
<proteinExistence type="inferred from homology"/>
<name>MIAB_ANOFW</name>